<protein>
    <recommendedName>
        <fullName evidence="1">DNA-directed RNA polymerase subunit beta</fullName>
        <shortName evidence="1">RNAP subunit beta</shortName>
        <ecNumber evidence="1">2.7.7.6</ecNumber>
    </recommendedName>
    <alternativeName>
        <fullName evidence="1">RNA polymerase subunit beta</fullName>
    </alternativeName>
    <alternativeName>
        <fullName evidence="1">Transcriptase subunit beta</fullName>
    </alternativeName>
</protein>
<evidence type="ECO:0000255" key="1">
    <source>
        <dbReference type="HAMAP-Rule" id="MF_01321"/>
    </source>
</evidence>
<proteinExistence type="inferred from homology"/>
<name>RPOB_SHESA</name>
<feature type="chain" id="PRO_0000300400" description="DNA-directed RNA polymerase subunit beta">
    <location>
        <begin position="1"/>
        <end position="1345"/>
    </location>
</feature>
<keyword id="KW-0240">DNA-directed RNA polymerase</keyword>
<keyword id="KW-0548">Nucleotidyltransferase</keyword>
<keyword id="KW-0804">Transcription</keyword>
<keyword id="KW-0808">Transferase</keyword>
<organism>
    <name type="scientific">Shewanella sp. (strain ANA-3)</name>
    <dbReference type="NCBI Taxonomy" id="94122"/>
    <lineage>
        <taxon>Bacteria</taxon>
        <taxon>Pseudomonadati</taxon>
        <taxon>Pseudomonadota</taxon>
        <taxon>Gammaproteobacteria</taxon>
        <taxon>Alteromonadales</taxon>
        <taxon>Shewanellaceae</taxon>
        <taxon>Shewanella</taxon>
    </lineage>
</organism>
<dbReference type="EC" id="2.7.7.6" evidence="1"/>
<dbReference type="EMBL" id="CP000469">
    <property type="protein sequence ID" value="ABK46436.1"/>
    <property type="molecule type" value="Genomic_DNA"/>
</dbReference>
<dbReference type="RefSeq" id="WP_011715457.1">
    <property type="nucleotide sequence ID" value="NC_008577.1"/>
</dbReference>
<dbReference type="SMR" id="A0KRL7"/>
<dbReference type="STRING" id="94122.Shewana3_0192"/>
<dbReference type="GeneID" id="94726179"/>
<dbReference type="KEGG" id="shn:Shewana3_0192"/>
<dbReference type="eggNOG" id="COG0085">
    <property type="taxonomic scope" value="Bacteria"/>
</dbReference>
<dbReference type="HOGENOM" id="CLU_000524_4_1_6"/>
<dbReference type="OrthoDB" id="9803954at2"/>
<dbReference type="Proteomes" id="UP000002589">
    <property type="component" value="Chromosome"/>
</dbReference>
<dbReference type="GO" id="GO:0000428">
    <property type="term" value="C:DNA-directed RNA polymerase complex"/>
    <property type="evidence" value="ECO:0007669"/>
    <property type="project" value="UniProtKB-KW"/>
</dbReference>
<dbReference type="GO" id="GO:0003677">
    <property type="term" value="F:DNA binding"/>
    <property type="evidence" value="ECO:0007669"/>
    <property type="project" value="UniProtKB-UniRule"/>
</dbReference>
<dbReference type="GO" id="GO:0003899">
    <property type="term" value="F:DNA-directed RNA polymerase activity"/>
    <property type="evidence" value="ECO:0007669"/>
    <property type="project" value="UniProtKB-UniRule"/>
</dbReference>
<dbReference type="GO" id="GO:0032549">
    <property type="term" value="F:ribonucleoside binding"/>
    <property type="evidence" value="ECO:0007669"/>
    <property type="project" value="InterPro"/>
</dbReference>
<dbReference type="GO" id="GO:0006351">
    <property type="term" value="P:DNA-templated transcription"/>
    <property type="evidence" value="ECO:0007669"/>
    <property type="project" value="UniProtKB-UniRule"/>
</dbReference>
<dbReference type="CDD" id="cd00653">
    <property type="entry name" value="RNA_pol_B_RPB2"/>
    <property type="match status" value="1"/>
</dbReference>
<dbReference type="FunFam" id="2.40.270.10:FF:000003">
    <property type="entry name" value="DNA-directed RNA polymerase subunit beta"/>
    <property type="match status" value="1"/>
</dbReference>
<dbReference type="FunFam" id="2.40.270.10:FF:000004">
    <property type="entry name" value="DNA-directed RNA polymerase subunit beta"/>
    <property type="match status" value="1"/>
</dbReference>
<dbReference type="FunFam" id="2.40.50.100:FF:000006">
    <property type="entry name" value="DNA-directed RNA polymerase subunit beta"/>
    <property type="match status" value="1"/>
</dbReference>
<dbReference type="FunFam" id="2.40.50.150:FF:000001">
    <property type="entry name" value="DNA-directed RNA polymerase subunit beta"/>
    <property type="match status" value="1"/>
</dbReference>
<dbReference type="FunFam" id="3.90.1100.10:FF:000002">
    <property type="entry name" value="DNA-directed RNA polymerase subunit beta"/>
    <property type="match status" value="1"/>
</dbReference>
<dbReference type="FunFam" id="3.90.1110.10:FF:000001">
    <property type="entry name" value="DNA-directed RNA polymerase subunit beta"/>
    <property type="match status" value="1"/>
</dbReference>
<dbReference type="FunFam" id="3.90.1110.10:FF:000004">
    <property type="entry name" value="DNA-directed RNA polymerase subunit beta"/>
    <property type="match status" value="1"/>
</dbReference>
<dbReference type="FunFam" id="3.90.1800.10:FF:000001">
    <property type="entry name" value="DNA-directed RNA polymerase subunit beta"/>
    <property type="match status" value="1"/>
</dbReference>
<dbReference type="Gene3D" id="2.40.50.100">
    <property type="match status" value="1"/>
</dbReference>
<dbReference type="Gene3D" id="2.40.50.150">
    <property type="match status" value="1"/>
</dbReference>
<dbReference type="Gene3D" id="3.90.1100.10">
    <property type="match status" value="2"/>
</dbReference>
<dbReference type="Gene3D" id="2.30.150.10">
    <property type="entry name" value="DNA-directed RNA polymerase, beta subunit, external 1 domain"/>
    <property type="match status" value="1"/>
</dbReference>
<dbReference type="Gene3D" id="2.40.270.10">
    <property type="entry name" value="DNA-directed RNA polymerase, subunit 2, domain 6"/>
    <property type="match status" value="1"/>
</dbReference>
<dbReference type="Gene3D" id="3.90.1800.10">
    <property type="entry name" value="RNA polymerase alpha subunit dimerisation domain"/>
    <property type="match status" value="1"/>
</dbReference>
<dbReference type="Gene3D" id="3.90.1110.10">
    <property type="entry name" value="RNA polymerase Rpb2, domain 2"/>
    <property type="match status" value="1"/>
</dbReference>
<dbReference type="HAMAP" id="MF_01321">
    <property type="entry name" value="RNApol_bact_RpoB"/>
    <property type="match status" value="1"/>
</dbReference>
<dbReference type="InterPro" id="IPR042107">
    <property type="entry name" value="DNA-dir_RNA_pol_bsu_ext_1_sf"/>
</dbReference>
<dbReference type="InterPro" id="IPR019462">
    <property type="entry name" value="DNA-dir_RNA_pol_bsu_external_1"/>
</dbReference>
<dbReference type="InterPro" id="IPR015712">
    <property type="entry name" value="DNA-dir_RNA_pol_su2"/>
</dbReference>
<dbReference type="InterPro" id="IPR007120">
    <property type="entry name" value="DNA-dir_RNAP_su2_dom"/>
</dbReference>
<dbReference type="InterPro" id="IPR037033">
    <property type="entry name" value="DNA-dir_RNAP_su2_hyb_sf"/>
</dbReference>
<dbReference type="InterPro" id="IPR010243">
    <property type="entry name" value="RNA_pol_bsu_bac"/>
</dbReference>
<dbReference type="InterPro" id="IPR007121">
    <property type="entry name" value="RNA_pol_bsu_CS"/>
</dbReference>
<dbReference type="InterPro" id="IPR007644">
    <property type="entry name" value="RNA_pol_bsu_protrusion"/>
</dbReference>
<dbReference type="InterPro" id="IPR007642">
    <property type="entry name" value="RNA_pol_Rpb2_2"/>
</dbReference>
<dbReference type="InterPro" id="IPR037034">
    <property type="entry name" value="RNA_pol_Rpb2_2_sf"/>
</dbReference>
<dbReference type="InterPro" id="IPR007645">
    <property type="entry name" value="RNA_pol_Rpb2_3"/>
</dbReference>
<dbReference type="InterPro" id="IPR007641">
    <property type="entry name" value="RNA_pol_Rpb2_7"/>
</dbReference>
<dbReference type="InterPro" id="IPR014724">
    <property type="entry name" value="RNA_pol_RPB2_OB-fold"/>
</dbReference>
<dbReference type="NCBIfam" id="NF001616">
    <property type="entry name" value="PRK00405.1"/>
    <property type="match status" value="1"/>
</dbReference>
<dbReference type="NCBIfam" id="TIGR02013">
    <property type="entry name" value="rpoB"/>
    <property type="match status" value="1"/>
</dbReference>
<dbReference type="PANTHER" id="PTHR20856">
    <property type="entry name" value="DNA-DIRECTED RNA POLYMERASE I SUBUNIT 2"/>
    <property type="match status" value="1"/>
</dbReference>
<dbReference type="Pfam" id="PF04563">
    <property type="entry name" value="RNA_pol_Rpb2_1"/>
    <property type="match status" value="1"/>
</dbReference>
<dbReference type="Pfam" id="PF04561">
    <property type="entry name" value="RNA_pol_Rpb2_2"/>
    <property type="match status" value="2"/>
</dbReference>
<dbReference type="Pfam" id="PF04565">
    <property type="entry name" value="RNA_pol_Rpb2_3"/>
    <property type="match status" value="1"/>
</dbReference>
<dbReference type="Pfam" id="PF10385">
    <property type="entry name" value="RNA_pol_Rpb2_45"/>
    <property type="match status" value="1"/>
</dbReference>
<dbReference type="Pfam" id="PF00562">
    <property type="entry name" value="RNA_pol_Rpb2_6"/>
    <property type="match status" value="1"/>
</dbReference>
<dbReference type="Pfam" id="PF04560">
    <property type="entry name" value="RNA_pol_Rpb2_7"/>
    <property type="match status" value="1"/>
</dbReference>
<dbReference type="SUPFAM" id="SSF64484">
    <property type="entry name" value="beta and beta-prime subunits of DNA dependent RNA-polymerase"/>
    <property type="match status" value="1"/>
</dbReference>
<dbReference type="PROSITE" id="PS01166">
    <property type="entry name" value="RNA_POL_BETA"/>
    <property type="match status" value="1"/>
</dbReference>
<reference key="1">
    <citation type="submission" date="2006-09" db="EMBL/GenBank/DDBJ databases">
        <title>Complete sequence of chromosome 1 of Shewanella sp. ANA-3.</title>
        <authorList>
            <person name="Copeland A."/>
            <person name="Lucas S."/>
            <person name="Lapidus A."/>
            <person name="Barry K."/>
            <person name="Detter J.C."/>
            <person name="Glavina del Rio T."/>
            <person name="Hammon N."/>
            <person name="Israni S."/>
            <person name="Dalin E."/>
            <person name="Tice H."/>
            <person name="Pitluck S."/>
            <person name="Chertkov O."/>
            <person name="Brettin T."/>
            <person name="Bruce D."/>
            <person name="Han C."/>
            <person name="Tapia R."/>
            <person name="Gilna P."/>
            <person name="Schmutz J."/>
            <person name="Larimer F."/>
            <person name="Land M."/>
            <person name="Hauser L."/>
            <person name="Kyrpides N."/>
            <person name="Kim E."/>
            <person name="Newman D."/>
            <person name="Salticov C."/>
            <person name="Konstantinidis K."/>
            <person name="Klappenback J."/>
            <person name="Tiedje J."/>
            <person name="Richardson P."/>
        </authorList>
    </citation>
    <scope>NUCLEOTIDE SEQUENCE [LARGE SCALE GENOMIC DNA]</scope>
    <source>
        <strain>ANA-3</strain>
    </source>
</reference>
<gene>
    <name evidence="1" type="primary">rpoB</name>
    <name type="ordered locus">Shewana3_0192</name>
</gene>
<sequence>MVYSYSEKKRIRKDFGKRPQVLDIPYLLSIQLDSFKKFTDQDPTGERGLEAAFRSVFPIKSFSGNSELQYVSYKLGEPVFDVKECQIRGVTYSAPLRVKLRMVLYDREAAAGTVKDIKEQEVYMGDIPLMTDNGTFVINGTERVIVSQLHRSPGVFFDHDRGKTHSSGKVLYNARIIPYRGSWLDFEFDPKDALFVRIDRRRKLPATIILRALEYSTQEILDLFFERVEFKIKKDTLVMTLVPERLRGETASYDIKDAEGTVLVEAGRRVTARHIRQLEKTNTTELEVPVEYIVGKYAAQDYIDPDTGEVLVSANSEISLEDLAKLSLAGIKELSTLYINELDHGAYISDTLRIDPTTNRLEALVEIYRMMRPGEPPTKDAAEALFQNLFFSEERYDLSKVGRMKFNRRLSIPDDEGSGVLSKEDIVAVMKNIIHIRNGFDEVDDIDHLGNRRIRSVGEMAENQFRVGLVRVERAVRERLSLGDLNELMPQDLINAKPISAAVKEFFGSSQLSQFMDQNNPLSEVTHKRRISALGPGGLTRERAGFEVRDVHPTHYGRLCPIETPEGPNIGLINSLASFARTNSYGFLETPYRKVVDGVITDDVEYLSAIEEGRYVIAQANIEVDSEGRMVEEQIACRHKGESTFMRASDIQYMDVSPQQIISVAASLIPFLEHDDANRALMGANMQRQAVPTLKSEKPLVGTGIERTLAVDSGVVVAAKRGGVIDYVDASRIVVKVNEDELRPGEAGIDIYNLTKYTRSNQNTCINQRPCCSVGEPVVRGDVLADGPSTDLGDLALGQNMRIAFMPWNGYNFEDSILISERVAQEDRFTTIHIQELSCIARDTKLGSEEITADIPNVGESALSKLDESGIVYIGAEVKGGDILVGKVTPKGETQLTPEEKLLRAIFGEKASDVKDSSLRVPNSVKGTIIDVQVFTRDGVEKDKRAIEIEEMHIAQARKDLGEEFKILEEGVLSRARNLLLSAGFTEAQIAALPRKDVLVQVIDDETKQTELEQLAEQHEELKADFDKKFEIKRRKITQGDDLAPGVLKIVKVYLAVKRTIQPGDKMAGRHGNKGVISKINPIEDMPYDEQGNPVDIVLNPLGVPSRMNIGQVLEVHLGAAAKGIGNKIAAMLEDQREKGLAEVRNYIKQVYELGDEVQQRVDIDSFTDDELLRLANNLKGGIPVATPAFDGAKEKEIKQMLELAGLPTSGQLKLFDGRTGNEFERPVTVGYMYMLKLNHLVDDKMHARSTGSYSLVTQQPLGGKAQFGGQRFGEMEVWALEAYGAAYTLQEMLTVKSDDVNGRTQMYKNIVDGNHQMQPGMPESFNVLLKEIRSLGINIELDQE</sequence>
<accession>A0KRL7</accession>
<comment type="function">
    <text evidence="1">DNA-dependent RNA polymerase catalyzes the transcription of DNA into RNA using the four ribonucleoside triphosphates as substrates.</text>
</comment>
<comment type="catalytic activity">
    <reaction evidence="1">
        <text>RNA(n) + a ribonucleoside 5'-triphosphate = RNA(n+1) + diphosphate</text>
        <dbReference type="Rhea" id="RHEA:21248"/>
        <dbReference type="Rhea" id="RHEA-COMP:14527"/>
        <dbReference type="Rhea" id="RHEA-COMP:17342"/>
        <dbReference type="ChEBI" id="CHEBI:33019"/>
        <dbReference type="ChEBI" id="CHEBI:61557"/>
        <dbReference type="ChEBI" id="CHEBI:140395"/>
        <dbReference type="EC" id="2.7.7.6"/>
    </reaction>
</comment>
<comment type="subunit">
    <text evidence="1">The RNAP catalytic core consists of 2 alpha, 1 beta, 1 beta' and 1 omega subunit. When a sigma factor is associated with the core the holoenzyme is formed, which can initiate transcription.</text>
</comment>
<comment type="similarity">
    <text evidence="1">Belongs to the RNA polymerase beta chain family.</text>
</comment>